<feature type="chain" id="PRO_0000098945" description="Tryptophan synthase beta chain 2">
    <location>
        <begin position="1"/>
        <end position="439"/>
    </location>
</feature>
<feature type="modified residue" description="N6-(pyridoxal phosphate)lysine" evidence="1">
    <location>
        <position position="99"/>
    </location>
</feature>
<protein>
    <recommendedName>
        <fullName>Tryptophan synthase beta chain 2</fullName>
        <ecNumber>4.2.1.20</ecNumber>
    </recommendedName>
</protein>
<gene>
    <name type="primary">trpB2</name>
    <name type="ordered locus">CE2880</name>
</gene>
<evidence type="ECO:0000250" key="1"/>
<evidence type="ECO:0000305" key="2"/>
<comment type="function">
    <text evidence="1">The beta subunit is responsible for the synthesis of L-tryptophan from indole and L-serine.</text>
</comment>
<comment type="catalytic activity">
    <reaction>
        <text>(1S,2R)-1-C-(indol-3-yl)glycerol 3-phosphate + L-serine = D-glyceraldehyde 3-phosphate + L-tryptophan + H2O</text>
        <dbReference type="Rhea" id="RHEA:10532"/>
        <dbReference type="ChEBI" id="CHEBI:15377"/>
        <dbReference type="ChEBI" id="CHEBI:33384"/>
        <dbReference type="ChEBI" id="CHEBI:57912"/>
        <dbReference type="ChEBI" id="CHEBI:58866"/>
        <dbReference type="ChEBI" id="CHEBI:59776"/>
        <dbReference type="EC" id="4.2.1.20"/>
    </reaction>
</comment>
<comment type="cofactor">
    <cofactor evidence="1">
        <name>pyridoxal 5'-phosphate</name>
        <dbReference type="ChEBI" id="CHEBI:597326"/>
    </cofactor>
</comment>
<comment type="pathway">
    <text>Amino-acid biosynthesis; L-tryptophan biosynthesis; L-tryptophan from chorismate: step 5/5.</text>
</comment>
<comment type="subunit">
    <text evidence="1">Tetramer of two alpha and two beta chains.</text>
</comment>
<comment type="similarity">
    <text evidence="2">Belongs to the TrpB family.</text>
</comment>
<comment type="sequence caution" evidence="2">
    <conflict type="erroneous initiation">
        <sequence resource="EMBL-CDS" id="BAC19690"/>
    </conflict>
</comment>
<reference key="1">
    <citation type="journal article" date="2003" name="Genome Res.">
        <title>Comparative complete genome sequence analysis of the amino acid replacements responsible for the thermostability of Corynebacterium efficiens.</title>
        <authorList>
            <person name="Nishio Y."/>
            <person name="Nakamura Y."/>
            <person name="Kawarabayasi Y."/>
            <person name="Usuda Y."/>
            <person name="Kimura E."/>
            <person name="Sugimoto S."/>
            <person name="Matsui K."/>
            <person name="Yamagishi A."/>
            <person name="Kikuchi H."/>
            <person name="Ikeo K."/>
            <person name="Gojobori T."/>
        </authorList>
    </citation>
    <scope>NUCLEOTIDE SEQUENCE [LARGE SCALE GENOMIC DNA]</scope>
    <source>
        <strain>DSM 44549 / YS-314 / AJ 12310 / JCM 11189 / NBRC 100395</strain>
    </source>
</reference>
<sequence length="439" mass="46998">MTTPATPTRQTLLDAYFGEYGGQFVPEVLLPALDELERAYVEALEDPTFQQELDDLYTNYLGRPTPITECANLPLEGQGRGTARIFLKREDLVHGGAHKGNQTIGQALLAKRLGKTRLIAETGAGQHGTATAMVAALFGMKCTVYMGAKDVARQQPNVYRMRLMGAEVVAVDEQSGNGLSSAIDVAINDWVNNLEDTHYLLGTAAGPHPFPTLVKKFHSVISRESREQMLERTGALPDAVVACVGGGSNAIGAFAQYLEDQPGNEKVRLIGVEPAGYGLDTDLNGAPIHEGRTMHLHGSNSYALLDEDGNLRNSHSVSAGLDYPGVGPEHAHLKDTGRAEYVGATDAEALQAFRMLSRYEGIIPALESSHALAHALKMAAEATEPINILVNLSGRGDKDVAYVRQLLGDHAALDPATDVLTEVDVLGVLEELTPQADTA</sequence>
<proteinExistence type="inferred from homology"/>
<dbReference type="EC" id="4.2.1.20"/>
<dbReference type="EMBL" id="BA000035">
    <property type="protein sequence ID" value="BAC19690.1"/>
    <property type="status" value="ALT_INIT"/>
    <property type="molecule type" value="Genomic_DNA"/>
</dbReference>
<dbReference type="RefSeq" id="WP_006768763.1">
    <property type="nucleotide sequence ID" value="NC_004369.1"/>
</dbReference>
<dbReference type="SMR" id="Q8FT12"/>
<dbReference type="STRING" id="196164.gene:10743330"/>
<dbReference type="KEGG" id="cef:CE2880"/>
<dbReference type="eggNOG" id="COG0133">
    <property type="taxonomic scope" value="Bacteria"/>
</dbReference>
<dbReference type="HOGENOM" id="CLU_016734_3_1_11"/>
<dbReference type="OrthoDB" id="9766131at2"/>
<dbReference type="UniPathway" id="UPA00035">
    <property type="reaction ID" value="UER00044"/>
</dbReference>
<dbReference type="Proteomes" id="UP000001409">
    <property type="component" value="Chromosome"/>
</dbReference>
<dbReference type="GO" id="GO:0005737">
    <property type="term" value="C:cytoplasm"/>
    <property type="evidence" value="ECO:0007669"/>
    <property type="project" value="TreeGrafter"/>
</dbReference>
<dbReference type="GO" id="GO:0004834">
    <property type="term" value="F:tryptophan synthase activity"/>
    <property type="evidence" value="ECO:0007669"/>
    <property type="project" value="UniProtKB-UniRule"/>
</dbReference>
<dbReference type="CDD" id="cd06446">
    <property type="entry name" value="Trp-synth_B"/>
    <property type="match status" value="1"/>
</dbReference>
<dbReference type="FunFam" id="3.40.50.1100:FF:000004">
    <property type="entry name" value="Tryptophan synthase beta chain"/>
    <property type="match status" value="1"/>
</dbReference>
<dbReference type="Gene3D" id="3.40.50.1100">
    <property type="match status" value="2"/>
</dbReference>
<dbReference type="HAMAP" id="MF_00133">
    <property type="entry name" value="Trp_synth_beta"/>
    <property type="match status" value="1"/>
</dbReference>
<dbReference type="InterPro" id="IPR006653">
    <property type="entry name" value="Trp_synth_b_CS"/>
</dbReference>
<dbReference type="InterPro" id="IPR006654">
    <property type="entry name" value="Trp_synth_beta"/>
</dbReference>
<dbReference type="InterPro" id="IPR023026">
    <property type="entry name" value="Trp_synth_beta/beta-like"/>
</dbReference>
<dbReference type="InterPro" id="IPR001926">
    <property type="entry name" value="TrpB-like_PALP"/>
</dbReference>
<dbReference type="InterPro" id="IPR036052">
    <property type="entry name" value="TrpB-like_PALP_sf"/>
</dbReference>
<dbReference type="NCBIfam" id="TIGR00263">
    <property type="entry name" value="trpB"/>
    <property type="match status" value="1"/>
</dbReference>
<dbReference type="PANTHER" id="PTHR48077:SF3">
    <property type="entry name" value="TRYPTOPHAN SYNTHASE"/>
    <property type="match status" value="1"/>
</dbReference>
<dbReference type="PANTHER" id="PTHR48077">
    <property type="entry name" value="TRYPTOPHAN SYNTHASE-RELATED"/>
    <property type="match status" value="1"/>
</dbReference>
<dbReference type="Pfam" id="PF00291">
    <property type="entry name" value="PALP"/>
    <property type="match status" value="1"/>
</dbReference>
<dbReference type="PIRSF" id="PIRSF001413">
    <property type="entry name" value="Trp_syn_beta"/>
    <property type="match status" value="1"/>
</dbReference>
<dbReference type="SUPFAM" id="SSF53686">
    <property type="entry name" value="Tryptophan synthase beta subunit-like PLP-dependent enzymes"/>
    <property type="match status" value="1"/>
</dbReference>
<dbReference type="PROSITE" id="PS00168">
    <property type="entry name" value="TRP_SYNTHASE_BETA"/>
    <property type="match status" value="1"/>
</dbReference>
<organism>
    <name type="scientific">Corynebacterium efficiens (strain DSM 44549 / YS-314 / AJ 12310 / JCM 11189 / NBRC 100395)</name>
    <dbReference type="NCBI Taxonomy" id="196164"/>
    <lineage>
        <taxon>Bacteria</taxon>
        <taxon>Bacillati</taxon>
        <taxon>Actinomycetota</taxon>
        <taxon>Actinomycetes</taxon>
        <taxon>Mycobacteriales</taxon>
        <taxon>Corynebacteriaceae</taxon>
        <taxon>Corynebacterium</taxon>
    </lineage>
</organism>
<keyword id="KW-0028">Amino-acid biosynthesis</keyword>
<keyword id="KW-0057">Aromatic amino acid biosynthesis</keyword>
<keyword id="KW-0456">Lyase</keyword>
<keyword id="KW-0663">Pyridoxal phosphate</keyword>
<keyword id="KW-1185">Reference proteome</keyword>
<keyword id="KW-0822">Tryptophan biosynthesis</keyword>
<name>TRPB2_COREF</name>
<accession>Q8FT12</accession>